<proteinExistence type="inferred from homology"/>
<sequence length="65" mass="7578">MAKKGTRVVVTLECTECRTVPPSEKRSPGVSRYTTEKNRRNTTERLELKKFCPQLNKMTIHKEIK</sequence>
<gene>
    <name evidence="1" type="primary">rpmG</name>
    <name evidence="1" type="synonym">rpl33</name>
    <name type="ordered locus">P9211_08941</name>
</gene>
<comment type="similarity">
    <text evidence="1">Belongs to the bacterial ribosomal protein bL33 family.</text>
</comment>
<keyword id="KW-1185">Reference proteome</keyword>
<keyword id="KW-0687">Ribonucleoprotein</keyword>
<keyword id="KW-0689">Ribosomal protein</keyword>
<feature type="chain" id="PRO_1000115152" description="Large ribosomal subunit protein bL33">
    <location>
        <begin position="1"/>
        <end position="65"/>
    </location>
</feature>
<feature type="region of interest" description="Disordered" evidence="2">
    <location>
        <begin position="20"/>
        <end position="40"/>
    </location>
</feature>
<dbReference type="EMBL" id="CP000878">
    <property type="protein sequence ID" value="ABX08825.1"/>
    <property type="molecule type" value="Genomic_DNA"/>
</dbReference>
<dbReference type="RefSeq" id="WP_012195447.1">
    <property type="nucleotide sequence ID" value="NC_009976.1"/>
</dbReference>
<dbReference type="SMR" id="A9BAG3"/>
<dbReference type="STRING" id="93059.P9211_08941"/>
<dbReference type="KEGG" id="pmj:P9211_08941"/>
<dbReference type="eggNOG" id="COG0267">
    <property type="taxonomic scope" value="Bacteria"/>
</dbReference>
<dbReference type="HOGENOM" id="CLU_190949_3_0_3"/>
<dbReference type="OrthoDB" id="9801333at2"/>
<dbReference type="Proteomes" id="UP000000788">
    <property type="component" value="Chromosome"/>
</dbReference>
<dbReference type="GO" id="GO:0005737">
    <property type="term" value="C:cytoplasm"/>
    <property type="evidence" value="ECO:0007669"/>
    <property type="project" value="UniProtKB-ARBA"/>
</dbReference>
<dbReference type="GO" id="GO:1990904">
    <property type="term" value="C:ribonucleoprotein complex"/>
    <property type="evidence" value="ECO:0007669"/>
    <property type="project" value="UniProtKB-KW"/>
</dbReference>
<dbReference type="GO" id="GO:0005840">
    <property type="term" value="C:ribosome"/>
    <property type="evidence" value="ECO:0007669"/>
    <property type="project" value="UniProtKB-KW"/>
</dbReference>
<dbReference type="GO" id="GO:0003735">
    <property type="term" value="F:structural constituent of ribosome"/>
    <property type="evidence" value="ECO:0007669"/>
    <property type="project" value="InterPro"/>
</dbReference>
<dbReference type="GO" id="GO:0006412">
    <property type="term" value="P:translation"/>
    <property type="evidence" value="ECO:0007669"/>
    <property type="project" value="UniProtKB-UniRule"/>
</dbReference>
<dbReference type="Gene3D" id="2.20.28.120">
    <property type="entry name" value="Ribosomal protein L33"/>
    <property type="match status" value="1"/>
</dbReference>
<dbReference type="HAMAP" id="MF_00294">
    <property type="entry name" value="Ribosomal_bL33"/>
    <property type="match status" value="1"/>
</dbReference>
<dbReference type="InterPro" id="IPR001705">
    <property type="entry name" value="Ribosomal_bL33"/>
</dbReference>
<dbReference type="InterPro" id="IPR018264">
    <property type="entry name" value="Ribosomal_bL33_CS"/>
</dbReference>
<dbReference type="InterPro" id="IPR038584">
    <property type="entry name" value="Ribosomal_bL33_sf"/>
</dbReference>
<dbReference type="InterPro" id="IPR011332">
    <property type="entry name" value="Ribosomal_zn-bd"/>
</dbReference>
<dbReference type="NCBIfam" id="NF001764">
    <property type="entry name" value="PRK00504.1"/>
    <property type="match status" value="1"/>
</dbReference>
<dbReference type="NCBIfam" id="NF001860">
    <property type="entry name" value="PRK00595.1"/>
    <property type="match status" value="1"/>
</dbReference>
<dbReference type="NCBIfam" id="TIGR01023">
    <property type="entry name" value="rpmG_bact"/>
    <property type="match status" value="1"/>
</dbReference>
<dbReference type="PANTHER" id="PTHR43168">
    <property type="entry name" value="50S RIBOSOMAL PROTEIN L33, CHLOROPLASTIC"/>
    <property type="match status" value="1"/>
</dbReference>
<dbReference type="PANTHER" id="PTHR43168:SF2">
    <property type="entry name" value="LARGE RIBOSOMAL SUBUNIT PROTEIN BL33C"/>
    <property type="match status" value="1"/>
</dbReference>
<dbReference type="Pfam" id="PF00471">
    <property type="entry name" value="Ribosomal_L33"/>
    <property type="match status" value="1"/>
</dbReference>
<dbReference type="SUPFAM" id="SSF57829">
    <property type="entry name" value="Zn-binding ribosomal proteins"/>
    <property type="match status" value="1"/>
</dbReference>
<dbReference type="PROSITE" id="PS00582">
    <property type="entry name" value="RIBOSOMAL_L33"/>
    <property type="match status" value="1"/>
</dbReference>
<organism>
    <name type="scientific">Prochlorococcus marinus (strain MIT 9211)</name>
    <dbReference type="NCBI Taxonomy" id="93059"/>
    <lineage>
        <taxon>Bacteria</taxon>
        <taxon>Bacillati</taxon>
        <taxon>Cyanobacteriota</taxon>
        <taxon>Cyanophyceae</taxon>
        <taxon>Synechococcales</taxon>
        <taxon>Prochlorococcaceae</taxon>
        <taxon>Prochlorococcus</taxon>
    </lineage>
</organism>
<protein>
    <recommendedName>
        <fullName evidence="1">Large ribosomal subunit protein bL33</fullName>
    </recommendedName>
    <alternativeName>
        <fullName evidence="3">50S ribosomal protein L33</fullName>
    </alternativeName>
</protein>
<name>RL33_PROM4</name>
<evidence type="ECO:0000255" key="1">
    <source>
        <dbReference type="HAMAP-Rule" id="MF_00294"/>
    </source>
</evidence>
<evidence type="ECO:0000256" key="2">
    <source>
        <dbReference type="SAM" id="MobiDB-lite"/>
    </source>
</evidence>
<evidence type="ECO:0000305" key="3"/>
<accession>A9BAG3</accession>
<reference key="1">
    <citation type="journal article" date="2007" name="PLoS Genet.">
        <title>Patterns and implications of gene gain and loss in the evolution of Prochlorococcus.</title>
        <authorList>
            <person name="Kettler G.C."/>
            <person name="Martiny A.C."/>
            <person name="Huang K."/>
            <person name="Zucker J."/>
            <person name="Coleman M.L."/>
            <person name="Rodrigue S."/>
            <person name="Chen F."/>
            <person name="Lapidus A."/>
            <person name="Ferriera S."/>
            <person name="Johnson J."/>
            <person name="Steglich C."/>
            <person name="Church G.M."/>
            <person name="Richardson P."/>
            <person name="Chisholm S.W."/>
        </authorList>
    </citation>
    <scope>NUCLEOTIDE SEQUENCE [LARGE SCALE GENOMIC DNA]</scope>
    <source>
        <strain>MIT 9211</strain>
    </source>
</reference>